<name>RNPA_THET2</name>
<accession>Q72LI2</accession>
<organism>
    <name type="scientific">Thermus thermophilus (strain ATCC BAA-163 / DSM 7039 / HB27)</name>
    <dbReference type="NCBI Taxonomy" id="262724"/>
    <lineage>
        <taxon>Bacteria</taxon>
        <taxon>Thermotogati</taxon>
        <taxon>Deinococcota</taxon>
        <taxon>Deinococci</taxon>
        <taxon>Thermales</taxon>
        <taxon>Thermaceae</taxon>
        <taxon>Thermus</taxon>
    </lineage>
</organism>
<feature type="chain" id="PRO_0000198558" description="Ribonuclease P protein component">
    <location>
        <begin position="1"/>
        <end position="163"/>
    </location>
</feature>
<feature type="region of interest" description="Disordered" evidence="2">
    <location>
        <begin position="1"/>
        <end position="68"/>
    </location>
</feature>
<feature type="compositionally biased region" description="Polar residues" evidence="2">
    <location>
        <begin position="8"/>
        <end position="19"/>
    </location>
</feature>
<protein>
    <recommendedName>
        <fullName evidence="1">Ribonuclease P protein component</fullName>
        <shortName evidence="1">RNase P protein</shortName>
        <shortName evidence="1">RNaseP protein</shortName>
        <ecNumber evidence="1">3.1.26.5</ecNumber>
    </recommendedName>
    <alternativeName>
        <fullName evidence="1">Protein C5</fullName>
    </alternativeName>
</protein>
<comment type="function">
    <text evidence="1">RNaseP catalyzes the removal of the 5'-leader sequence from pre-tRNA to produce the mature 5'-terminus. It can also cleave other RNA substrates such as 4.5S RNA. The protein component plays an auxiliary but essential role in vivo by binding to the 5'-leader sequence and broadening the substrate specificity of the ribozyme.</text>
</comment>
<comment type="catalytic activity">
    <reaction evidence="1">
        <text>Endonucleolytic cleavage of RNA, removing 5'-extranucleotides from tRNA precursor.</text>
        <dbReference type="EC" id="3.1.26.5"/>
    </reaction>
</comment>
<comment type="subunit">
    <text evidence="1">Consists of a catalytic RNA component (M1 or rnpB) and a protein subunit.</text>
</comment>
<comment type="similarity">
    <text evidence="1">Belongs to the RnpA family.</text>
</comment>
<comment type="sequence caution" evidence="3">
    <conflict type="erroneous initiation">
        <sequence resource="EMBL-CDS" id="AAS80425"/>
    </conflict>
</comment>
<keyword id="KW-0255">Endonuclease</keyword>
<keyword id="KW-0378">Hydrolase</keyword>
<keyword id="KW-0540">Nuclease</keyword>
<keyword id="KW-0694">RNA-binding</keyword>
<keyword id="KW-0819">tRNA processing</keyword>
<gene>
    <name evidence="1" type="primary">rnpA</name>
    <name type="ordered locus">TT_C0077</name>
</gene>
<dbReference type="EC" id="3.1.26.5" evidence="1"/>
<dbReference type="EMBL" id="AE017221">
    <property type="protein sequence ID" value="AAS80425.1"/>
    <property type="status" value="ALT_INIT"/>
    <property type="molecule type" value="Genomic_DNA"/>
</dbReference>
<dbReference type="SMR" id="Q72LI2"/>
<dbReference type="KEGG" id="tth:TT_C0077"/>
<dbReference type="eggNOG" id="COG0594">
    <property type="taxonomic scope" value="Bacteria"/>
</dbReference>
<dbReference type="HOGENOM" id="CLU_1626301_0_0_0"/>
<dbReference type="Proteomes" id="UP000000592">
    <property type="component" value="Chromosome"/>
</dbReference>
<dbReference type="GO" id="GO:0030677">
    <property type="term" value="C:ribonuclease P complex"/>
    <property type="evidence" value="ECO:0007669"/>
    <property type="project" value="TreeGrafter"/>
</dbReference>
<dbReference type="GO" id="GO:0042781">
    <property type="term" value="F:3'-tRNA processing endoribonuclease activity"/>
    <property type="evidence" value="ECO:0007669"/>
    <property type="project" value="TreeGrafter"/>
</dbReference>
<dbReference type="GO" id="GO:0004526">
    <property type="term" value="F:ribonuclease P activity"/>
    <property type="evidence" value="ECO:0007669"/>
    <property type="project" value="UniProtKB-UniRule"/>
</dbReference>
<dbReference type="GO" id="GO:0000049">
    <property type="term" value="F:tRNA binding"/>
    <property type="evidence" value="ECO:0007669"/>
    <property type="project" value="UniProtKB-UniRule"/>
</dbReference>
<dbReference type="GO" id="GO:0001682">
    <property type="term" value="P:tRNA 5'-leader removal"/>
    <property type="evidence" value="ECO:0007669"/>
    <property type="project" value="UniProtKB-UniRule"/>
</dbReference>
<dbReference type="Gene3D" id="3.30.230.10">
    <property type="match status" value="1"/>
</dbReference>
<dbReference type="HAMAP" id="MF_00227">
    <property type="entry name" value="RNase_P"/>
    <property type="match status" value="1"/>
</dbReference>
<dbReference type="InterPro" id="IPR020568">
    <property type="entry name" value="Ribosomal_Su5_D2-typ_SF"/>
</dbReference>
<dbReference type="InterPro" id="IPR014721">
    <property type="entry name" value="Ribsml_uS5_D2-typ_fold_subgr"/>
</dbReference>
<dbReference type="InterPro" id="IPR000100">
    <property type="entry name" value="RNase_P"/>
</dbReference>
<dbReference type="InterPro" id="IPR020539">
    <property type="entry name" value="RNase_P_CS"/>
</dbReference>
<dbReference type="NCBIfam" id="TIGR00188">
    <property type="entry name" value="rnpA"/>
    <property type="match status" value="1"/>
</dbReference>
<dbReference type="PANTHER" id="PTHR33992">
    <property type="entry name" value="RIBONUCLEASE P PROTEIN COMPONENT"/>
    <property type="match status" value="1"/>
</dbReference>
<dbReference type="PANTHER" id="PTHR33992:SF1">
    <property type="entry name" value="RIBONUCLEASE P PROTEIN COMPONENT"/>
    <property type="match status" value="1"/>
</dbReference>
<dbReference type="Pfam" id="PF00825">
    <property type="entry name" value="Ribonuclease_P"/>
    <property type="match status" value="1"/>
</dbReference>
<dbReference type="SUPFAM" id="SSF54211">
    <property type="entry name" value="Ribosomal protein S5 domain 2-like"/>
    <property type="match status" value="1"/>
</dbReference>
<dbReference type="PROSITE" id="PS00648">
    <property type="entry name" value="RIBONUCLEASE_P"/>
    <property type="match status" value="1"/>
</dbReference>
<reference key="1">
    <citation type="journal article" date="2004" name="Nat. Biotechnol.">
        <title>The genome sequence of the extreme thermophile Thermus thermophilus.</title>
        <authorList>
            <person name="Henne A."/>
            <person name="Brueggemann H."/>
            <person name="Raasch C."/>
            <person name="Wiezer A."/>
            <person name="Hartsch T."/>
            <person name="Liesegang H."/>
            <person name="Johann A."/>
            <person name="Lienard T."/>
            <person name="Gohl O."/>
            <person name="Martinez-Arias R."/>
            <person name="Jacobi C."/>
            <person name="Starkuviene V."/>
            <person name="Schlenczeck S."/>
            <person name="Dencker S."/>
            <person name="Huber R."/>
            <person name="Klenk H.-P."/>
            <person name="Kramer W."/>
            <person name="Merkl R."/>
            <person name="Gottschalk G."/>
            <person name="Fritz H.-J."/>
        </authorList>
    </citation>
    <scope>NUCLEOTIDE SEQUENCE [LARGE SCALE GENOMIC DNA]</scope>
    <source>
        <strain>ATCC BAA-163 / DSM 7039 / HB27</strain>
    </source>
</reference>
<evidence type="ECO:0000255" key="1">
    <source>
        <dbReference type="HAMAP-Rule" id="MF_00227"/>
    </source>
</evidence>
<evidence type="ECO:0000256" key="2">
    <source>
        <dbReference type="SAM" id="MobiDB-lite"/>
    </source>
</evidence>
<evidence type="ECO:0000305" key="3"/>
<proteinExistence type="inferred from homology"/>
<sequence length="163" mass="17851">MDEKDVATQPQETGQNPRLSGQDEDPGRPEGAEAPPSEGALAPHARRSEAVGPKPPAPGGKLLSLKGDRAFQRLRKGRAGRGRYVSVKWLPAAELRVGIVVSKKVGKAVVRNKVKRRLREILRRLHLPQAHLLVVASPEAREADFAELFRDVVRALRKSGLVQ</sequence>